<sequence>MGVFNYETETTSVIPAARLFKAFILEGDTLIPKVAPQAISSVENIEGNGGPGTIKKITFPEGSPFKYVKERVDEVDHANFKYSYSMIEGGALGDTLEKICNEIKIVATPDGGSILKISNKYHTKGDHEMKAEHMKAIKEKGEALLRAVESYLLAHSDAYN</sequence>
<reference key="1">
    <citation type="journal article" date="1995" name="J. Biol. Chem.">
        <title>Isoforms of Bet v 1, the major birch pollen allergen, analyzed by liquid chromatography, mass spectrometry, and cDNA cloning.</title>
        <authorList>
            <person name="Swoboda I."/>
            <person name="Jilek A."/>
            <person name="Ferreira F."/>
            <person name="Engel E."/>
            <person name="Hoffman-Sommergruber K."/>
            <person name="Scheiner O."/>
            <person name="Kraft D."/>
            <person name="Breiteneder H."/>
            <person name="Pittenauer E."/>
            <person name="Schmid E."/>
            <person name="Vicente O."/>
            <person name="Heberle-Bors E."/>
            <person name="Ahorn H."/>
            <person name="Breitenbach M."/>
        </authorList>
    </citation>
    <scope>NUCLEOTIDE SEQUENCE [MRNA]</scope>
    <scope>PARTIAL PROTEIN SEQUENCE</scope>
    <source>
        <tissue>Pollen</tissue>
    </source>
</reference>
<gene>
    <name type="primary">BETV1B</name>
</gene>
<comment type="function">
    <text>May be a general steroid carrier protein.</text>
</comment>
<comment type="subcellular location">
    <subcellularLocation>
        <location>Cytoplasm</location>
    </subcellularLocation>
</comment>
<comment type="allergen">
    <text>Causes an allergic reaction in human. Is a cause of type I allergic reactions in Europe, North America and USSR.</text>
</comment>
<comment type="similarity">
    <text evidence="2">Belongs to the BetVI family.</text>
</comment>
<feature type="initiator methionine" description="Removed">
    <location>
        <position position="1"/>
    </location>
</feature>
<feature type="chain" id="PRO_0000154175" description="Major pollen allergen Bet v 1-B">
    <location>
        <begin position="2"/>
        <end position="160"/>
    </location>
</feature>
<feature type="binding site" evidence="1">
    <location>
        <position position="55"/>
    </location>
    <ligand>
        <name>brassinolide</name>
        <dbReference type="ChEBI" id="CHEBI:28277"/>
    </ligand>
</feature>
<feature type="binding site" evidence="1">
    <location>
        <position position="82"/>
    </location>
    <ligand>
        <name>brassinolide</name>
        <dbReference type="ChEBI" id="CHEBI:28277"/>
    </ligand>
</feature>
<feature type="binding site" evidence="1">
    <location>
        <position position="84"/>
    </location>
    <ligand>
        <name>brassinolide</name>
        <dbReference type="ChEBI" id="CHEBI:28277"/>
    </ligand>
</feature>
<feature type="binding site" evidence="1">
    <location>
        <position position="101"/>
    </location>
    <ligand>
        <name>brassinolide</name>
        <dbReference type="ChEBI" id="CHEBI:28277"/>
    </ligand>
</feature>
<protein>
    <recommendedName>
        <fullName>Major pollen allergen Bet v 1-B</fullName>
    </recommendedName>
    <alternativeName>
        <fullName>Allergen Bet v I-B</fullName>
    </alternativeName>
    <allergenName>Bet v 1-B</allergenName>
</protein>
<keyword id="KW-0020">Allergen</keyword>
<keyword id="KW-0963">Cytoplasm</keyword>
<keyword id="KW-0903">Direct protein sequencing</keyword>
<keyword id="KW-0568">Pathogenesis-related protein</keyword>
<keyword id="KW-0611">Plant defense</keyword>
<accession>P45431</accession>
<evidence type="ECO:0000250" key="1">
    <source>
        <dbReference type="UniProtKB" id="P43185"/>
    </source>
</evidence>
<evidence type="ECO:0000305" key="2"/>
<proteinExistence type="evidence at protein level"/>
<name>BEV1B_BETPN</name>
<organism>
    <name type="scientific">Betula pendula</name>
    <name type="common">European white birch</name>
    <name type="synonym">Betula verrucosa</name>
    <dbReference type="NCBI Taxonomy" id="3505"/>
    <lineage>
        <taxon>Eukaryota</taxon>
        <taxon>Viridiplantae</taxon>
        <taxon>Streptophyta</taxon>
        <taxon>Embryophyta</taxon>
        <taxon>Tracheophyta</taxon>
        <taxon>Spermatophyta</taxon>
        <taxon>Magnoliopsida</taxon>
        <taxon>eudicotyledons</taxon>
        <taxon>Gunneridae</taxon>
        <taxon>Pentapetalae</taxon>
        <taxon>rosids</taxon>
        <taxon>fabids</taxon>
        <taxon>Fagales</taxon>
        <taxon>Betulaceae</taxon>
        <taxon>Betula</taxon>
    </lineage>
</organism>
<dbReference type="EMBL" id="X77200">
    <property type="protein sequence ID" value="CAA54421.1"/>
    <property type="molecule type" value="mRNA"/>
</dbReference>
<dbReference type="PIR" id="A55699">
    <property type="entry name" value="A55699"/>
</dbReference>
<dbReference type="SMR" id="P45431"/>
<dbReference type="Allergome" id="89">
    <property type="allergen name" value="Bet v 1"/>
</dbReference>
<dbReference type="Allergome" id="93">
    <property type="allergen name" value="Bet v 1.0201"/>
</dbReference>
<dbReference type="GO" id="GO:0005737">
    <property type="term" value="C:cytoplasm"/>
    <property type="evidence" value="ECO:0007669"/>
    <property type="project" value="UniProtKB-SubCell"/>
</dbReference>
<dbReference type="GO" id="GO:0005634">
    <property type="term" value="C:nucleus"/>
    <property type="evidence" value="ECO:0007669"/>
    <property type="project" value="TreeGrafter"/>
</dbReference>
<dbReference type="GO" id="GO:0010427">
    <property type="term" value="F:abscisic acid binding"/>
    <property type="evidence" value="ECO:0007669"/>
    <property type="project" value="InterPro"/>
</dbReference>
<dbReference type="GO" id="GO:0004864">
    <property type="term" value="F:protein phosphatase inhibitor activity"/>
    <property type="evidence" value="ECO:0007669"/>
    <property type="project" value="InterPro"/>
</dbReference>
<dbReference type="GO" id="GO:0038023">
    <property type="term" value="F:signaling receptor activity"/>
    <property type="evidence" value="ECO:0007669"/>
    <property type="project" value="InterPro"/>
</dbReference>
<dbReference type="GO" id="GO:0009738">
    <property type="term" value="P:abscisic acid-activated signaling pathway"/>
    <property type="evidence" value="ECO:0007669"/>
    <property type="project" value="InterPro"/>
</dbReference>
<dbReference type="GO" id="GO:0006952">
    <property type="term" value="P:defense response"/>
    <property type="evidence" value="ECO:0007669"/>
    <property type="project" value="UniProtKB-KW"/>
</dbReference>
<dbReference type="CDD" id="cd07816">
    <property type="entry name" value="Bet_v1-like"/>
    <property type="match status" value="1"/>
</dbReference>
<dbReference type="FunFam" id="3.30.530.20:FF:000007">
    <property type="entry name" value="Major pollen allergen Bet v 1-A"/>
    <property type="match status" value="1"/>
</dbReference>
<dbReference type="Gene3D" id="3.30.530.20">
    <property type="match status" value="1"/>
</dbReference>
<dbReference type="InterPro" id="IPR000916">
    <property type="entry name" value="Bet_v_I/MLP"/>
</dbReference>
<dbReference type="InterPro" id="IPR024949">
    <property type="entry name" value="Bet_v_I_allergen"/>
</dbReference>
<dbReference type="InterPro" id="IPR050279">
    <property type="entry name" value="Plant_def-hormone_signal"/>
</dbReference>
<dbReference type="InterPro" id="IPR023393">
    <property type="entry name" value="START-like_dom_sf"/>
</dbReference>
<dbReference type="PANTHER" id="PTHR31213">
    <property type="entry name" value="OS08G0374000 PROTEIN-RELATED"/>
    <property type="match status" value="1"/>
</dbReference>
<dbReference type="PANTHER" id="PTHR31213:SF55">
    <property type="entry name" value="STRESS-INDUCED PROTEIN SAM22"/>
    <property type="match status" value="1"/>
</dbReference>
<dbReference type="Pfam" id="PF00407">
    <property type="entry name" value="Bet_v_1"/>
    <property type="match status" value="1"/>
</dbReference>
<dbReference type="PRINTS" id="PR00634">
    <property type="entry name" value="BETALLERGEN"/>
</dbReference>
<dbReference type="SUPFAM" id="SSF55961">
    <property type="entry name" value="Bet v1-like"/>
    <property type="match status" value="1"/>
</dbReference>
<dbReference type="PROSITE" id="PS00451">
    <property type="entry name" value="PATHOGENESIS_BETVI"/>
    <property type="match status" value="1"/>
</dbReference>